<name>HYP2_HYPJE</name>
<accession>P79073</accession>
<dbReference type="EMBL" id="Y11894">
    <property type="protein sequence ID" value="CAA72636.1"/>
    <property type="molecule type" value="Genomic_DNA"/>
</dbReference>
<dbReference type="PDB" id="1R2M">
    <property type="method" value="X-ray"/>
    <property type="resolution" value="1.00 A"/>
    <property type="chains" value="A/B=16-86"/>
</dbReference>
<dbReference type="PDB" id="2B97">
    <property type="method" value="X-ray"/>
    <property type="resolution" value="0.75 A"/>
    <property type="chains" value="A/B=16-86"/>
</dbReference>
<dbReference type="PDB" id="2PL6">
    <property type="method" value="X-ray"/>
    <property type="resolution" value="2.20 A"/>
    <property type="chains" value="A/B/C/D/E/F/G/H=16-86"/>
</dbReference>
<dbReference type="PDB" id="2PL7">
    <property type="method" value="X-ray"/>
    <property type="resolution" value="1.00 A"/>
    <property type="chains" value="A/B=16-86"/>
</dbReference>
<dbReference type="PDB" id="3QQT">
    <property type="method" value="X-ray"/>
    <property type="resolution" value="1.90 A"/>
    <property type="chains" value="A/B=16-86"/>
</dbReference>
<dbReference type="PDBsum" id="1R2M"/>
<dbReference type="PDBsum" id="2B97"/>
<dbReference type="PDBsum" id="2PL6"/>
<dbReference type="PDBsum" id="2PL7"/>
<dbReference type="PDBsum" id="3QQT"/>
<dbReference type="SMR" id="P79073"/>
<dbReference type="VEuPathDB" id="FungiDB:TrQ_004956"/>
<dbReference type="OMA" id="QANCASM"/>
<dbReference type="EvolutionaryTrace" id="P79073"/>
<dbReference type="GO" id="GO:0005576">
    <property type="term" value="C:extracellular region"/>
    <property type="evidence" value="ECO:0007669"/>
    <property type="project" value="UniProtKB-KW"/>
</dbReference>
<dbReference type="GO" id="GO:0031160">
    <property type="term" value="C:spore wall"/>
    <property type="evidence" value="ECO:0007669"/>
    <property type="project" value="UniProtKB-SubCell"/>
</dbReference>
<dbReference type="CDD" id="cd23508">
    <property type="entry name" value="hydrophobin_II"/>
    <property type="match status" value="1"/>
</dbReference>
<dbReference type="Gene3D" id="3.20.120.10">
    <property type="entry name" value="Hydrophobin"/>
    <property type="match status" value="1"/>
</dbReference>
<dbReference type="InterPro" id="IPR010636">
    <property type="entry name" value="Cerato-ulmin_hydrophobin"/>
</dbReference>
<dbReference type="InterPro" id="IPR036686">
    <property type="entry name" value="Hydrophobin_sf"/>
</dbReference>
<dbReference type="PANTHER" id="PTHR42341">
    <property type="entry name" value="HYDROPHOBIN"/>
    <property type="match status" value="1"/>
</dbReference>
<dbReference type="PANTHER" id="PTHR42341:SF2">
    <property type="entry name" value="HYDROPHOBIN"/>
    <property type="match status" value="1"/>
</dbReference>
<dbReference type="Pfam" id="PF06766">
    <property type="entry name" value="Hydrophobin_2"/>
    <property type="match status" value="1"/>
</dbReference>
<dbReference type="SUPFAM" id="SSF101751">
    <property type="entry name" value="Hydrophobin II, HfbII"/>
    <property type="match status" value="1"/>
</dbReference>
<organism>
    <name type="scientific">Hypocrea jecorina</name>
    <name type="common">Trichoderma reesei</name>
    <dbReference type="NCBI Taxonomy" id="51453"/>
    <lineage>
        <taxon>Eukaryota</taxon>
        <taxon>Fungi</taxon>
        <taxon>Dikarya</taxon>
        <taxon>Ascomycota</taxon>
        <taxon>Pezizomycotina</taxon>
        <taxon>Sordariomycetes</taxon>
        <taxon>Hypocreomycetidae</taxon>
        <taxon>Hypocreales</taxon>
        <taxon>Hypocreaceae</taxon>
        <taxon>Trichoderma</taxon>
    </lineage>
</organism>
<feature type="signal peptide" evidence="6">
    <location>
        <begin position="1"/>
        <end position="15"/>
    </location>
</feature>
<feature type="chain" id="PRO_0000013521" description="Class II hydrophobin 2">
    <location>
        <begin position="16"/>
        <end position="86"/>
    </location>
</feature>
<feature type="disulfide bond" evidence="1 3 4 5 9 10 11 12 13">
    <location>
        <begin position="18"/>
        <end position="67"/>
    </location>
</feature>
<feature type="disulfide bond" evidence="1 3 4 5 9 10 11 12 13">
    <location>
        <begin position="28"/>
        <end position="58"/>
    </location>
</feature>
<feature type="disulfide bond" evidence="1 3 4 5 9 10 11 12 13">
    <location>
        <begin position="29"/>
        <end position="41"/>
    </location>
</feature>
<feature type="disulfide bond" evidence="1 3 4 5 9 10 11 12 13">
    <location>
        <begin position="68"/>
        <end position="79"/>
    </location>
</feature>
<feature type="strand" evidence="15">
    <location>
        <begin position="20"/>
        <end position="23"/>
    </location>
</feature>
<feature type="strand" evidence="14">
    <location>
        <begin position="25"/>
        <end position="33"/>
    </location>
</feature>
<feature type="turn" evidence="14">
    <location>
        <begin position="34"/>
        <end position="36"/>
    </location>
</feature>
<feature type="strand" evidence="14">
    <location>
        <begin position="37"/>
        <end position="42"/>
    </location>
</feature>
<feature type="helix" evidence="14">
    <location>
        <begin position="51"/>
        <end position="60"/>
    </location>
</feature>
<feature type="strand" evidence="14">
    <location>
        <begin position="64"/>
        <end position="69"/>
    </location>
</feature>
<feature type="strand" evidence="14">
    <location>
        <begin position="74"/>
        <end position="81"/>
    </location>
</feature>
<keyword id="KW-0002">3D-structure</keyword>
<keyword id="KW-0134">Cell wall</keyword>
<keyword id="KW-0183">Conidiation</keyword>
<keyword id="KW-0903">Direct protein sequencing</keyword>
<keyword id="KW-1015">Disulfide bond</keyword>
<keyword id="KW-0964">Secreted</keyword>
<keyword id="KW-0732">Signal</keyword>
<keyword id="KW-0749">Sporulation</keyword>
<gene>
    <name evidence="7" type="primary">hfb2</name>
</gene>
<evidence type="ECO:0000269" key="1">
    <source>
    </source>
</evidence>
<evidence type="ECO:0000269" key="2">
    <source>
    </source>
</evidence>
<evidence type="ECO:0000269" key="3">
    <source>
    </source>
</evidence>
<evidence type="ECO:0000269" key="4">
    <source>
    </source>
</evidence>
<evidence type="ECO:0000269" key="5">
    <source>
    </source>
</evidence>
<evidence type="ECO:0000269" key="6">
    <source>
    </source>
</evidence>
<evidence type="ECO:0000303" key="7">
    <source>
    </source>
</evidence>
<evidence type="ECO:0000305" key="8"/>
<evidence type="ECO:0007744" key="9">
    <source>
        <dbReference type="PDB" id="1R2M"/>
    </source>
</evidence>
<evidence type="ECO:0007744" key="10">
    <source>
        <dbReference type="PDB" id="2B97"/>
    </source>
</evidence>
<evidence type="ECO:0007744" key="11">
    <source>
        <dbReference type="PDB" id="2PL6"/>
    </source>
</evidence>
<evidence type="ECO:0007744" key="12">
    <source>
        <dbReference type="PDB" id="2PL7"/>
    </source>
</evidence>
<evidence type="ECO:0007744" key="13">
    <source>
        <dbReference type="PDB" id="3QQT"/>
    </source>
</evidence>
<evidence type="ECO:0007829" key="14">
    <source>
        <dbReference type="PDB" id="2B97"/>
    </source>
</evidence>
<evidence type="ECO:0007829" key="15">
    <source>
        <dbReference type="PDB" id="3QQT"/>
    </source>
</evidence>
<comment type="function">
    <text evidence="2 6 8">Aerial growth, conidiation, and dispersal of filamentous fungi in the environment rely upon a capability of their secreting small amphipathic proteins called hydrophobins (HPBs) with low sequence identity. Class I can self-assemble into an outermost layer of rodlet bundles on aerial cell surfaces, conferring cellular hydrophobicity that supports fungal growth, development and dispersal; whereas Class II form highly ordered films at water-air interfaces through intermolecular interactions but contribute nothing to the rodlet structure (Probable). Hbf2 is a class II hydrophobin that is involved in sporuration (PubMed:16243453, PubMed:9346297).</text>
</comment>
<comment type="subunit">
    <text evidence="4">Homodimer (PubMed:17636262). Homodimers further self-assemble to form highly ordered films at water-air interfaces through intermolecular interactions (PubMed:17636262).</text>
</comment>
<comment type="subcellular location">
    <subcellularLocation>
        <location evidence="6">Secreted</location>
    </subcellularLocation>
    <subcellularLocation>
        <location evidence="6">Spore wall</location>
    </subcellularLocation>
    <subcellularLocation>
        <location evidence="7">Secreted</location>
        <location evidence="7">Cell wall</location>
    </subcellularLocation>
</comment>
<comment type="developmental stage">
    <text evidence="6">Expressed during conidiation. No expression in vegetative or sporulating aerial hyphae.</text>
</comment>
<comment type="induction">
    <text evidence="6">By C and N starvation, and by light.</text>
</comment>
<comment type="disruption phenotype">
    <text evidence="2">Leads to wettable and fluffy colonies (PubMed:16243453). Results in thinner hyphae and impairs the formation of aerial hyphae (PubMed:16243453).</text>
</comment>
<comment type="similarity">
    <text evidence="8">Belongs to the cerato-ulmin hydrophobin family.</text>
</comment>
<reference key="1">
    <citation type="journal article" date="1997" name="Eur. J. Biochem.">
        <title>Differential expression of the vegetative and spore-bound hydrophobins of Trichoderma reesei: cloning and characterization of the hfb2 gene.</title>
        <authorList>
            <person name="Nakari-Setaelae T."/>
            <person name="Aro N."/>
            <person name="Ilmen M."/>
            <person name="Munoz G."/>
            <person name="Kalkkinen N."/>
            <person name="Penttilae M."/>
        </authorList>
    </citation>
    <scope>NUCLEOTIDE SEQUENCE [GENOMIC DNA]</scope>
    <scope>PROTEIN SEQUENCE OF 16-35</scope>
    <scope>FUNCTION</scope>
    <scope>SUBCELLULAR LOCATION</scope>
    <scope>INDUCTION</scope>
    <scope>DEVELOPMENTAL STAGE</scope>
    <source>
        <strain>ATCC 56765 / Rut C-30</strain>
    </source>
</reference>
<reference key="2">
    <citation type="journal article" date="2005" name="FEMS Microbiol. Lett.">
        <title>The Trichoderma reesei hydrophobin genes hfb1 and hfb2 have diverse functions in fungal development.</title>
        <authorList>
            <person name="Askolin S."/>
            <person name="Penttilae M."/>
            <person name="Woesten H.A."/>
            <person name="Nakari-Setaelae T."/>
        </authorList>
    </citation>
    <scope>FUNCTION</scope>
    <scope>DISRUPTION PHENOTYPE</scope>
</reference>
<reference evidence="9" key="3">
    <citation type="journal article" date="2004" name="J. Biol. Chem.">
        <title>Atomic resolution structure of the HFBII hydrophobin, a self-assembling amphiphile.</title>
        <authorList>
            <person name="Hakanpaa J."/>
            <person name="Paananen A."/>
            <person name="Askolin S."/>
            <person name="Nakari-Setaelae T."/>
            <person name="Parkkinen T."/>
            <person name="Penttilae M."/>
            <person name="Linder M.B."/>
            <person name="Rouvinen J."/>
        </authorList>
    </citation>
    <scope>X-RAY CRYSTALLOGRAPHY (1.0 ANGSTROMS) OF 16-86</scope>
    <scope>DISULFIDE BONDS</scope>
</reference>
<reference evidence="10" key="4">
    <citation type="journal article" date="2006" name="Acta Crystallogr. D">
        <title>Hydrophobin HFBII in detail: ultrahigh-resolution structure at 0.75 A.</title>
        <authorList>
            <person name="Hakanpaa J."/>
            <person name="Linder M."/>
            <person name="Popov A."/>
            <person name="Schmidt A."/>
            <person name="Rouvinen J."/>
        </authorList>
    </citation>
    <scope>X-RAY CRYSTALLOGRAPHY (0.75 ANGSTROMS) OF 16-86</scope>
    <scope>DISULFIDE BONDS</scope>
</reference>
<reference evidence="11 12" key="5">
    <citation type="journal article" date="2007" name="J. Biol. Chem.">
        <title>Crystal structures of hydrophobin HFBII in the presence of detergent implicate the formation of fibrils and monolayer films.</title>
        <authorList>
            <person name="Kallio J.M."/>
            <person name="Linder M.B."/>
            <person name="Rouvinen J."/>
        </authorList>
    </citation>
    <scope>X-RAY CRYSTALLOGRAPHY (1.00 ANGSTROMS) OF 16-86</scope>
    <scope>DISULFIDE BONDS</scope>
    <scope>SUBUNIT</scope>
</reference>
<reference evidence="13" key="6">
    <citation type="journal article" date="2011" name="Chem. Commun. (Camb.)">
        <title>Amphiphilic nanotubes in the crystal structure of a biosurfactant protein hydrophobin HFBII.</title>
        <authorList>
            <person name="Kallio J.M."/>
            <person name="Rouvinen J."/>
        </authorList>
    </citation>
    <scope>X-RAY CRYSTALLOGRAPHY (1.90 ANGSTROMS) OF 16-86</scope>
    <scope>DISULFIDE BONDS</scope>
</reference>
<proteinExistence type="evidence at protein level"/>
<protein>
    <recommendedName>
        <fullName evidence="7">Class II hydrophobin 2</fullName>
    </recommendedName>
    <alternativeName>
        <fullName evidence="7">Hydrophobin II</fullName>
        <shortName evidence="7">HFBII</shortName>
    </alternativeName>
</protein>
<sequence>MQFFAVALFATSALAAVCPTGLFSNPLCCATNVLDLIGVDCKTPTIAVDTGAIFQAHCASKGSKPLCCVAPVADQALLCQKAIGTF</sequence>